<feature type="chain" id="PRO_0000151178" description="Undecaprenyl-diphosphatase">
    <location>
        <begin position="1"/>
        <end position="289"/>
    </location>
</feature>
<feature type="transmembrane region" description="Helical" evidence="1">
    <location>
        <begin position="23"/>
        <end position="43"/>
    </location>
</feature>
<feature type="transmembrane region" description="Helical" evidence="1">
    <location>
        <begin position="56"/>
        <end position="76"/>
    </location>
</feature>
<feature type="transmembrane region" description="Helical" evidence="1">
    <location>
        <begin position="104"/>
        <end position="124"/>
    </location>
</feature>
<feature type="transmembrane region" description="Helical" evidence="1">
    <location>
        <begin position="135"/>
        <end position="155"/>
    </location>
</feature>
<feature type="transmembrane region" description="Helical" evidence="1">
    <location>
        <begin position="165"/>
        <end position="185"/>
    </location>
</feature>
<feature type="transmembrane region" description="Helical" evidence="1">
    <location>
        <begin position="210"/>
        <end position="230"/>
    </location>
</feature>
<feature type="transmembrane region" description="Helical" evidence="1">
    <location>
        <begin position="235"/>
        <end position="255"/>
    </location>
</feature>
<feature type="transmembrane region" description="Helical" evidence="1">
    <location>
        <begin position="269"/>
        <end position="289"/>
    </location>
</feature>
<name>UPPP_PROMA</name>
<accession>Q7VCK5</accession>
<gene>
    <name evidence="1" type="primary">uppP</name>
    <name type="synonym">bacA</name>
    <name type="synonym">upk</name>
    <name type="ordered locus">Pro_0735</name>
</gene>
<organism>
    <name type="scientific">Prochlorococcus marinus (strain SARG / CCMP1375 / SS120)</name>
    <dbReference type="NCBI Taxonomy" id="167539"/>
    <lineage>
        <taxon>Bacteria</taxon>
        <taxon>Bacillati</taxon>
        <taxon>Cyanobacteriota</taxon>
        <taxon>Cyanophyceae</taxon>
        <taxon>Synechococcales</taxon>
        <taxon>Prochlorococcaceae</taxon>
        <taxon>Prochlorococcus</taxon>
    </lineage>
</organism>
<dbReference type="EC" id="3.6.1.27" evidence="1"/>
<dbReference type="EMBL" id="AE017126">
    <property type="protein sequence ID" value="AAP99779.1"/>
    <property type="molecule type" value="Genomic_DNA"/>
</dbReference>
<dbReference type="RefSeq" id="NP_875127.1">
    <property type="nucleotide sequence ID" value="NC_005042.1"/>
</dbReference>
<dbReference type="RefSeq" id="WP_011124887.1">
    <property type="nucleotide sequence ID" value="NC_005042.1"/>
</dbReference>
<dbReference type="SMR" id="Q7VCK5"/>
<dbReference type="STRING" id="167539.Pro_0735"/>
<dbReference type="EnsemblBacteria" id="AAP99779">
    <property type="protein sequence ID" value="AAP99779"/>
    <property type="gene ID" value="Pro_0735"/>
</dbReference>
<dbReference type="KEGG" id="pma:Pro_0735"/>
<dbReference type="PATRIC" id="fig|167539.5.peg.777"/>
<dbReference type="eggNOG" id="COG1968">
    <property type="taxonomic scope" value="Bacteria"/>
</dbReference>
<dbReference type="HOGENOM" id="CLU_060296_1_2_3"/>
<dbReference type="OrthoDB" id="9808289at2"/>
<dbReference type="Proteomes" id="UP000001420">
    <property type="component" value="Chromosome"/>
</dbReference>
<dbReference type="GO" id="GO:0005886">
    <property type="term" value="C:plasma membrane"/>
    <property type="evidence" value="ECO:0007669"/>
    <property type="project" value="UniProtKB-SubCell"/>
</dbReference>
<dbReference type="GO" id="GO:0050380">
    <property type="term" value="F:undecaprenyl-diphosphatase activity"/>
    <property type="evidence" value="ECO:0007669"/>
    <property type="project" value="UniProtKB-UniRule"/>
</dbReference>
<dbReference type="GO" id="GO:0071555">
    <property type="term" value="P:cell wall organization"/>
    <property type="evidence" value="ECO:0007669"/>
    <property type="project" value="UniProtKB-KW"/>
</dbReference>
<dbReference type="GO" id="GO:0009252">
    <property type="term" value="P:peptidoglycan biosynthetic process"/>
    <property type="evidence" value="ECO:0007669"/>
    <property type="project" value="UniProtKB-KW"/>
</dbReference>
<dbReference type="GO" id="GO:0008360">
    <property type="term" value="P:regulation of cell shape"/>
    <property type="evidence" value="ECO:0007669"/>
    <property type="project" value="UniProtKB-KW"/>
</dbReference>
<dbReference type="GO" id="GO:0046677">
    <property type="term" value="P:response to antibiotic"/>
    <property type="evidence" value="ECO:0007669"/>
    <property type="project" value="UniProtKB-UniRule"/>
</dbReference>
<dbReference type="HAMAP" id="MF_01006">
    <property type="entry name" value="Undec_diphosphatase"/>
    <property type="match status" value="1"/>
</dbReference>
<dbReference type="InterPro" id="IPR003824">
    <property type="entry name" value="UppP"/>
</dbReference>
<dbReference type="NCBIfam" id="NF001394">
    <property type="entry name" value="PRK00281.2-5"/>
    <property type="match status" value="1"/>
</dbReference>
<dbReference type="NCBIfam" id="TIGR00753">
    <property type="entry name" value="undec_PP_bacA"/>
    <property type="match status" value="1"/>
</dbReference>
<dbReference type="PANTHER" id="PTHR30622">
    <property type="entry name" value="UNDECAPRENYL-DIPHOSPHATASE"/>
    <property type="match status" value="1"/>
</dbReference>
<dbReference type="PANTHER" id="PTHR30622:SF4">
    <property type="entry name" value="UNDECAPRENYL-DIPHOSPHATASE"/>
    <property type="match status" value="1"/>
</dbReference>
<dbReference type="Pfam" id="PF02673">
    <property type="entry name" value="BacA"/>
    <property type="match status" value="1"/>
</dbReference>
<comment type="function">
    <text evidence="1">Catalyzes the dephosphorylation of undecaprenyl diphosphate (UPP). Confers resistance to bacitracin.</text>
</comment>
<comment type="catalytic activity">
    <reaction evidence="1">
        <text>di-trans,octa-cis-undecaprenyl diphosphate + H2O = di-trans,octa-cis-undecaprenyl phosphate + phosphate + H(+)</text>
        <dbReference type="Rhea" id="RHEA:28094"/>
        <dbReference type="ChEBI" id="CHEBI:15377"/>
        <dbReference type="ChEBI" id="CHEBI:15378"/>
        <dbReference type="ChEBI" id="CHEBI:43474"/>
        <dbReference type="ChEBI" id="CHEBI:58405"/>
        <dbReference type="ChEBI" id="CHEBI:60392"/>
        <dbReference type="EC" id="3.6.1.27"/>
    </reaction>
</comment>
<comment type="subcellular location">
    <subcellularLocation>
        <location evidence="1">Cell inner membrane</location>
        <topology evidence="1">Multi-pass membrane protein</topology>
    </subcellularLocation>
</comment>
<comment type="miscellaneous">
    <text>Bacitracin is thought to be involved in the inhibition of peptidoglycan synthesis by sequestering undecaprenyl diphosphate, thereby reducing the pool of lipid carrier available.</text>
</comment>
<comment type="similarity">
    <text evidence="1">Belongs to the UppP family.</text>
</comment>
<proteinExistence type="inferred from homology"/>
<keyword id="KW-0046">Antibiotic resistance</keyword>
<keyword id="KW-0997">Cell inner membrane</keyword>
<keyword id="KW-1003">Cell membrane</keyword>
<keyword id="KW-0133">Cell shape</keyword>
<keyword id="KW-0961">Cell wall biogenesis/degradation</keyword>
<keyword id="KW-0378">Hydrolase</keyword>
<keyword id="KW-0472">Membrane</keyword>
<keyword id="KW-0573">Peptidoglycan synthesis</keyword>
<keyword id="KW-1185">Reference proteome</keyword>
<keyword id="KW-0812">Transmembrane</keyword>
<keyword id="KW-1133">Transmembrane helix</keyword>
<evidence type="ECO:0000255" key="1">
    <source>
        <dbReference type="HAMAP-Rule" id="MF_01006"/>
    </source>
</evidence>
<reference key="1">
    <citation type="journal article" date="2003" name="Proc. Natl. Acad. Sci. U.S.A.">
        <title>Genome sequence of the cyanobacterium Prochlorococcus marinus SS120, a nearly minimal oxyphototrophic genome.</title>
        <authorList>
            <person name="Dufresne A."/>
            <person name="Salanoubat M."/>
            <person name="Partensky F."/>
            <person name="Artiguenave F."/>
            <person name="Axmann I.M."/>
            <person name="Barbe V."/>
            <person name="Duprat S."/>
            <person name="Galperin M.Y."/>
            <person name="Koonin E.V."/>
            <person name="Le Gall F."/>
            <person name="Makarova K.S."/>
            <person name="Ostrowski M."/>
            <person name="Oztas S."/>
            <person name="Robert C."/>
            <person name="Rogozin I.B."/>
            <person name="Scanlan D.J."/>
            <person name="Tandeau de Marsac N."/>
            <person name="Weissenbach J."/>
            <person name="Wincker P."/>
            <person name="Wolf Y.I."/>
            <person name="Hess W.R."/>
        </authorList>
    </citation>
    <scope>NUCLEOTIDE SEQUENCE [LARGE SCALE GENOMIC DNA]</scope>
    <source>
        <strain>SARG / CCMP1375 / SS120</strain>
    </source>
</reference>
<protein>
    <recommendedName>
        <fullName evidence="1">Undecaprenyl-diphosphatase</fullName>
        <ecNumber evidence="1">3.6.1.27</ecNumber>
    </recommendedName>
    <alternativeName>
        <fullName evidence="1">Bacitracin resistance protein</fullName>
    </alternativeName>
    <alternativeName>
        <fullName evidence="1">Undecaprenyl pyrophosphate phosphatase</fullName>
    </alternativeName>
</protein>
<sequence>MVLLAVGELSASLSLLEECWHYLFLGIIQGLTEFFPISSTAHLKVIPLLLSWDDPGVAVTASLQLGSIIALIAYFWNDLAFLMRGISKASFQNSWNNQNTKLASAIVLGTLPIVFAGMLIKLFWQGYETSPIRSIPAIAVVSIVMALLLLIAENVGRRTRNFENLSFWDGQIIGFSQVLALIPGVSRSGITITTALMIGWERKSAARFSFLLGIPAITLAGLVELKQAFGSFELVDVFPLLLGITSSAISSWIAIDCLMKFLQTQSMMIFITYRFLFGTLLLFWYYLAF</sequence>